<name>PLAT3_HUMAN</name>
<dbReference type="EC" id="2.3.1.-" evidence="8 10 12 13"/>
<dbReference type="EC" id="3.1.1.32" evidence="8 10 12 13 14"/>
<dbReference type="EC" id="3.1.1.4" evidence="8 10 12 13 14"/>
<dbReference type="EMBL" id="X92814">
    <property type="protein sequence ID" value="CAA63423.1"/>
    <property type="molecule type" value="mRNA"/>
</dbReference>
<dbReference type="EMBL" id="AB030814">
    <property type="protein sequence ID" value="BAB08108.1"/>
    <property type="molecule type" value="mRNA"/>
</dbReference>
<dbReference type="EMBL" id="AF317086">
    <property type="protein sequence ID" value="AAL26892.1"/>
    <property type="molecule type" value="mRNA"/>
</dbReference>
<dbReference type="EMBL" id="AB439591">
    <property type="protein sequence ID" value="BAH08749.1"/>
    <property type="molecule type" value="mRNA"/>
</dbReference>
<dbReference type="EMBL" id="AK313075">
    <property type="protein sequence ID" value="BAG35901.1"/>
    <property type="molecule type" value="mRNA"/>
</dbReference>
<dbReference type="EMBL" id="CH471076">
    <property type="protein sequence ID" value="EAW74158.1"/>
    <property type="molecule type" value="Genomic_DNA"/>
</dbReference>
<dbReference type="EMBL" id="BC001387">
    <property type="protein sequence ID" value="AAH01387.1"/>
    <property type="molecule type" value="mRNA"/>
</dbReference>
<dbReference type="EMBL" id="BC103807">
    <property type="protein sequence ID" value="AAI03808.1"/>
    <property type="molecule type" value="mRNA"/>
</dbReference>
<dbReference type="CCDS" id="CCDS8047.1"/>
<dbReference type="RefSeq" id="NP_001121675.1">
    <property type="nucleotide sequence ID" value="NM_001128203.2"/>
</dbReference>
<dbReference type="RefSeq" id="NP_009000.2">
    <property type="nucleotide sequence ID" value="NM_007069.3"/>
</dbReference>
<dbReference type="RefSeq" id="XP_006718489.1">
    <property type="nucleotide sequence ID" value="XM_006718426.1"/>
</dbReference>
<dbReference type="RefSeq" id="XP_054223516.1">
    <property type="nucleotide sequence ID" value="XM_054367541.1"/>
</dbReference>
<dbReference type="PDB" id="2KYT">
    <property type="method" value="NMR"/>
    <property type="chains" value="A=1-125"/>
</dbReference>
<dbReference type="PDB" id="4DOT">
    <property type="method" value="X-ray"/>
    <property type="resolution" value="1.96 A"/>
    <property type="chains" value="A=1-132"/>
</dbReference>
<dbReference type="PDB" id="4FA0">
    <property type="method" value="X-ray"/>
    <property type="resolution" value="2.65 A"/>
    <property type="chains" value="A=1-134"/>
</dbReference>
<dbReference type="PDB" id="4Q95">
    <property type="method" value="X-ray"/>
    <property type="resolution" value="2.20 A"/>
    <property type="chains" value="A/B=2-38, A/B=59-129"/>
</dbReference>
<dbReference type="PDB" id="7C3Z">
    <property type="method" value="X-ray"/>
    <property type="resolution" value="1.96 A"/>
    <property type="chains" value="A=5-125"/>
</dbReference>
<dbReference type="PDB" id="7C41">
    <property type="method" value="X-ray"/>
    <property type="resolution" value="2.28 A"/>
    <property type="chains" value="D=65-74"/>
</dbReference>
<dbReference type="PDB" id="7ZOM">
    <property type="method" value="X-ray"/>
    <property type="resolution" value="1.60 A"/>
    <property type="chains" value="A=1-132"/>
</dbReference>
<dbReference type="PDBsum" id="2KYT"/>
<dbReference type="PDBsum" id="4DOT"/>
<dbReference type="PDBsum" id="4FA0"/>
<dbReference type="PDBsum" id="4Q95"/>
<dbReference type="PDBsum" id="7C3Z"/>
<dbReference type="PDBsum" id="7C41"/>
<dbReference type="PDBsum" id="7ZOM"/>
<dbReference type="BMRB" id="P53816"/>
<dbReference type="SMR" id="P53816"/>
<dbReference type="BioGRID" id="116317">
    <property type="interactions" value="24"/>
</dbReference>
<dbReference type="FunCoup" id="P53816">
    <property type="interactions" value="449"/>
</dbReference>
<dbReference type="IntAct" id="P53816">
    <property type="interactions" value="8"/>
</dbReference>
<dbReference type="STRING" id="9606.ENSP00000320337"/>
<dbReference type="BindingDB" id="P53816"/>
<dbReference type="ChEMBL" id="CHEMBL3831244"/>
<dbReference type="SwissLipids" id="SLP:000001077"/>
<dbReference type="iPTMnet" id="P53816"/>
<dbReference type="PhosphoSitePlus" id="P53816"/>
<dbReference type="SwissPalm" id="P53816"/>
<dbReference type="BioMuta" id="PLA2G16"/>
<dbReference type="DMDM" id="20141767"/>
<dbReference type="jPOST" id="P53816"/>
<dbReference type="MassIVE" id="P53816"/>
<dbReference type="PaxDb" id="9606-ENSP00000320337"/>
<dbReference type="PeptideAtlas" id="P53816"/>
<dbReference type="ProteomicsDB" id="56634"/>
<dbReference type="Pumba" id="P53816"/>
<dbReference type="Antibodypedia" id="28982">
    <property type="antibodies" value="342 antibodies from 25 providers"/>
</dbReference>
<dbReference type="DNASU" id="11145"/>
<dbReference type="Ensembl" id="ENST00000323646.9">
    <property type="protein sequence ID" value="ENSP00000320337.5"/>
    <property type="gene ID" value="ENSG00000176485.14"/>
</dbReference>
<dbReference type="Ensembl" id="ENST00000415826.3">
    <property type="protein sequence ID" value="ENSP00000389124.1"/>
    <property type="gene ID" value="ENSG00000176485.14"/>
</dbReference>
<dbReference type="GeneID" id="11145"/>
<dbReference type="KEGG" id="hsa:11145"/>
<dbReference type="MANE-Select" id="ENST00000415826.3">
    <property type="protein sequence ID" value="ENSP00000389124.1"/>
    <property type="RefSeq nucleotide sequence ID" value="NM_001128203.2"/>
    <property type="RefSeq protein sequence ID" value="NP_001121675.1"/>
</dbReference>
<dbReference type="UCSC" id="uc001nxh.4">
    <property type="organism name" value="human"/>
</dbReference>
<dbReference type="AGR" id="HGNC:17825"/>
<dbReference type="CTD" id="11145"/>
<dbReference type="DisGeNET" id="11145"/>
<dbReference type="GeneCards" id="PLAAT3"/>
<dbReference type="HGNC" id="HGNC:17825">
    <property type="gene designation" value="PLAAT3"/>
</dbReference>
<dbReference type="HPA" id="ENSG00000176485">
    <property type="expression patterns" value="Tissue enhanced (adipose tissue, brain)"/>
</dbReference>
<dbReference type="MalaCards" id="PLAAT3"/>
<dbReference type="MIM" id="613867">
    <property type="type" value="gene"/>
</dbReference>
<dbReference type="MIM" id="620683">
    <property type="type" value="phenotype"/>
</dbReference>
<dbReference type="neXtProt" id="NX_P53816"/>
<dbReference type="OpenTargets" id="ENSG00000176485"/>
<dbReference type="Orphanet" id="686999">
    <property type="disease" value="Lipodystrophy-demyelinating peripheral sensory-motor neuropathy syndrome"/>
</dbReference>
<dbReference type="VEuPathDB" id="HostDB:ENSG00000176485"/>
<dbReference type="eggNOG" id="ENOG502S0JN">
    <property type="taxonomic scope" value="Eukaryota"/>
</dbReference>
<dbReference type="GeneTree" id="ENSGT00940000154853"/>
<dbReference type="HOGENOM" id="CLU_109418_0_1_1"/>
<dbReference type="InParanoid" id="P53816"/>
<dbReference type="OMA" id="PYCIFRG"/>
<dbReference type="OrthoDB" id="421951at2759"/>
<dbReference type="PAN-GO" id="P53816">
    <property type="GO annotations" value="5 GO annotations based on evolutionary models"/>
</dbReference>
<dbReference type="PhylomeDB" id="P53816"/>
<dbReference type="TreeFam" id="TF330836"/>
<dbReference type="BioCyc" id="MetaCyc:HS11053-MONOMER"/>
<dbReference type="PathwayCommons" id="P53816"/>
<dbReference type="Reactome" id="R-HSA-1482788">
    <property type="pathway name" value="Acyl chain remodelling of PC"/>
</dbReference>
<dbReference type="Reactome" id="R-HSA-1482801">
    <property type="pathway name" value="Acyl chain remodelling of PS"/>
</dbReference>
<dbReference type="Reactome" id="R-HSA-1482839">
    <property type="pathway name" value="Acyl chain remodelling of PE"/>
</dbReference>
<dbReference type="Reactome" id="R-HSA-1482922">
    <property type="pathway name" value="Acyl chain remodelling of PI"/>
</dbReference>
<dbReference type="SignaLink" id="P53816"/>
<dbReference type="SIGNOR" id="P53816"/>
<dbReference type="BioGRID-ORCS" id="11145">
    <property type="hits" value="10 hits in 1148 CRISPR screens"/>
</dbReference>
<dbReference type="ChiTaRS" id="PLA2G16">
    <property type="organism name" value="human"/>
</dbReference>
<dbReference type="EvolutionaryTrace" id="P53816"/>
<dbReference type="GeneWiki" id="HRASLS3"/>
<dbReference type="GenomeRNAi" id="11145"/>
<dbReference type="Pharos" id="P53816">
    <property type="development level" value="Tchem"/>
</dbReference>
<dbReference type="PRO" id="PR:P53816"/>
<dbReference type="Proteomes" id="UP000005640">
    <property type="component" value="Chromosome 11"/>
</dbReference>
<dbReference type="RNAct" id="P53816">
    <property type="molecule type" value="protein"/>
</dbReference>
<dbReference type="Bgee" id="ENSG00000176485">
    <property type="expression patterns" value="Expressed in C1 segment of cervical spinal cord and 204 other cell types or tissues"/>
</dbReference>
<dbReference type="ExpressionAtlas" id="P53816">
    <property type="expression patterns" value="baseline and differential"/>
</dbReference>
<dbReference type="GO" id="GO:0005737">
    <property type="term" value="C:cytoplasm"/>
    <property type="evidence" value="ECO:0000318"/>
    <property type="project" value="GO_Central"/>
</dbReference>
<dbReference type="GO" id="GO:0005829">
    <property type="term" value="C:cytosol"/>
    <property type="evidence" value="ECO:0000250"/>
    <property type="project" value="UniProtKB"/>
</dbReference>
<dbReference type="GO" id="GO:0005783">
    <property type="term" value="C:endoplasmic reticulum"/>
    <property type="evidence" value="ECO:0000250"/>
    <property type="project" value="UniProtKB"/>
</dbReference>
<dbReference type="GO" id="GO:0005789">
    <property type="term" value="C:endoplasmic reticulum membrane"/>
    <property type="evidence" value="ECO:0007669"/>
    <property type="project" value="UniProtKB-SubCell"/>
</dbReference>
<dbReference type="GO" id="GO:0005765">
    <property type="term" value="C:lysosomal membrane"/>
    <property type="evidence" value="ECO:0007669"/>
    <property type="project" value="UniProtKB-SubCell"/>
</dbReference>
<dbReference type="GO" id="GO:0005764">
    <property type="term" value="C:lysosome"/>
    <property type="evidence" value="ECO:0000250"/>
    <property type="project" value="UniProtKB"/>
</dbReference>
<dbReference type="GO" id="GO:0031966">
    <property type="term" value="C:mitochondrial membrane"/>
    <property type="evidence" value="ECO:0007669"/>
    <property type="project" value="UniProtKB-SubCell"/>
</dbReference>
<dbReference type="GO" id="GO:0005739">
    <property type="term" value="C:mitochondrion"/>
    <property type="evidence" value="ECO:0000250"/>
    <property type="project" value="UniProtKB"/>
</dbReference>
<dbReference type="GO" id="GO:0005635">
    <property type="term" value="C:nuclear envelope"/>
    <property type="evidence" value="ECO:0000250"/>
    <property type="project" value="UniProtKB"/>
</dbReference>
<dbReference type="GO" id="GO:0048471">
    <property type="term" value="C:perinuclear region of cytoplasm"/>
    <property type="evidence" value="ECO:0007669"/>
    <property type="project" value="UniProtKB-SubCell"/>
</dbReference>
<dbReference type="GO" id="GO:0005778">
    <property type="term" value="C:peroxisomal membrane"/>
    <property type="evidence" value="ECO:0007669"/>
    <property type="project" value="UniProtKB-SubCell"/>
</dbReference>
<dbReference type="GO" id="GO:0005777">
    <property type="term" value="C:peroxisome"/>
    <property type="evidence" value="ECO:0000250"/>
    <property type="project" value="UniProtKB"/>
</dbReference>
<dbReference type="GO" id="GO:0005886">
    <property type="term" value="C:plasma membrane"/>
    <property type="evidence" value="ECO:0007669"/>
    <property type="project" value="UniProtKB-SubCell"/>
</dbReference>
<dbReference type="GO" id="GO:0016746">
    <property type="term" value="F:acyltransferase activity"/>
    <property type="evidence" value="ECO:0000304"/>
    <property type="project" value="Reactome"/>
</dbReference>
<dbReference type="GO" id="GO:0008289">
    <property type="term" value="F:lipid binding"/>
    <property type="evidence" value="ECO:0000269"/>
    <property type="project" value="DisProt"/>
</dbReference>
<dbReference type="GO" id="GO:0016410">
    <property type="term" value="F:N-acyltransferase activity"/>
    <property type="evidence" value="ECO:0000314"/>
    <property type="project" value="UniProtKB"/>
</dbReference>
<dbReference type="GO" id="GO:0008970">
    <property type="term" value="F:phospholipase A1 activity"/>
    <property type="evidence" value="ECO:0000314"/>
    <property type="project" value="UniProtKB"/>
</dbReference>
<dbReference type="GO" id="GO:0004623">
    <property type="term" value="F:phospholipase A2 activity"/>
    <property type="evidence" value="ECO:0000314"/>
    <property type="project" value="UniProtKB"/>
</dbReference>
<dbReference type="GO" id="GO:0046485">
    <property type="term" value="P:ether lipid metabolic process"/>
    <property type="evidence" value="ECO:0000250"/>
    <property type="project" value="UniProtKB"/>
</dbReference>
<dbReference type="GO" id="GO:0070306">
    <property type="term" value="P:lens fiber cell differentiation"/>
    <property type="evidence" value="ECO:0000250"/>
    <property type="project" value="UniProtKB"/>
</dbReference>
<dbReference type="GO" id="GO:0016042">
    <property type="term" value="P:lipid catabolic process"/>
    <property type="evidence" value="ECO:0000250"/>
    <property type="project" value="UniProtKB"/>
</dbReference>
<dbReference type="GO" id="GO:0030397">
    <property type="term" value="P:membrane disassembly"/>
    <property type="evidence" value="ECO:0000250"/>
    <property type="project" value="UniProtKB"/>
</dbReference>
<dbReference type="GO" id="GO:0070292">
    <property type="term" value="P:N-acylphosphatidylethanolamine metabolic process"/>
    <property type="evidence" value="ECO:0000314"/>
    <property type="project" value="UniProtKB"/>
</dbReference>
<dbReference type="GO" id="GO:1903008">
    <property type="term" value="P:organelle disassembly"/>
    <property type="evidence" value="ECO:0000250"/>
    <property type="project" value="UniProtKB"/>
</dbReference>
<dbReference type="GO" id="GO:0007031">
    <property type="term" value="P:peroxisome organization"/>
    <property type="evidence" value="ECO:0000250"/>
    <property type="project" value="UniProtKB"/>
</dbReference>
<dbReference type="GO" id="GO:0036152">
    <property type="term" value="P:phosphatidylethanolamine acyl-chain remodeling"/>
    <property type="evidence" value="ECO:0000304"/>
    <property type="project" value="Reactome"/>
</dbReference>
<dbReference type="GO" id="GO:0008654">
    <property type="term" value="P:phospholipid biosynthetic process"/>
    <property type="evidence" value="ECO:0007669"/>
    <property type="project" value="Ensembl"/>
</dbReference>
<dbReference type="GO" id="GO:0006644">
    <property type="term" value="P:phospholipid metabolic process"/>
    <property type="evidence" value="ECO:0000314"/>
    <property type="project" value="UniProtKB"/>
</dbReference>
<dbReference type="GO" id="GO:1904177">
    <property type="term" value="P:regulation of adipose tissue development"/>
    <property type="evidence" value="ECO:0000250"/>
    <property type="project" value="UniProtKB"/>
</dbReference>
<dbReference type="GO" id="GO:0009617">
    <property type="term" value="P:response to bacterium"/>
    <property type="evidence" value="ECO:0007669"/>
    <property type="project" value="Ensembl"/>
</dbReference>
<dbReference type="GO" id="GO:0006641">
    <property type="term" value="P:triglyceride metabolic process"/>
    <property type="evidence" value="ECO:0000250"/>
    <property type="project" value="UniProtKB"/>
</dbReference>
<dbReference type="DisProt" id="DP02684"/>
<dbReference type="FunFam" id="3.90.1720.10:FF:000002">
    <property type="entry name" value="HRAS like suppressor 2"/>
    <property type="match status" value="1"/>
</dbReference>
<dbReference type="Gene3D" id="3.90.1720.10">
    <property type="entry name" value="endopeptidase domain like (from Nostoc punctiforme)"/>
    <property type="match status" value="1"/>
</dbReference>
<dbReference type="InterPro" id="IPR051496">
    <property type="entry name" value="H-rev107_PLA/AT"/>
</dbReference>
<dbReference type="InterPro" id="IPR007053">
    <property type="entry name" value="LRAT_dom"/>
</dbReference>
<dbReference type="PANTHER" id="PTHR13943">
    <property type="entry name" value="HRAS-LIKE SUPPRESSOR - RELATED"/>
    <property type="match status" value="1"/>
</dbReference>
<dbReference type="PANTHER" id="PTHR13943:SF31">
    <property type="entry name" value="PHOSPHOLIPASE A AND ACYLTRANSFERASE 3"/>
    <property type="match status" value="1"/>
</dbReference>
<dbReference type="Pfam" id="PF04970">
    <property type="entry name" value="LRAT"/>
    <property type="match status" value="1"/>
</dbReference>
<dbReference type="PROSITE" id="PS51934">
    <property type="entry name" value="LRAT"/>
    <property type="match status" value="1"/>
</dbReference>
<gene>
    <name evidence="26" type="primary">PLAAT3</name>
    <name evidence="21" type="synonym">HRASLS3</name>
    <name evidence="24" type="synonym">HREV107</name>
    <name type="synonym">PLA2G16</name>
</gene>
<sequence>MRAPIPEPKPGDLIEIFRPFYRHWAIYVGDGYVVHLAPPSEVAGAGAASVMSALTDKAIVKKELLYDVAGSDKYQVNNKHDDKYSPLPCSKIIQRAEELVGQEVLYKLTSENCEHFVNELRYGVARSDQVRDVIIAASVAGMGLAAMSLIGVMFSRNKRQKQ</sequence>
<feature type="chain" id="PRO_0000152484" description="Phospholipase A and acyltransferase 3">
    <location>
        <begin position="1"/>
        <end position="162"/>
    </location>
</feature>
<feature type="topological domain" description="Cytoplasmic" evidence="3">
    <location>
        <begin position="1"/>
        <end position="133"/>
    </location>
</feature>
<feature type="transmembrane region" description="Helical" evidence="3">
    <location>
        <begin position="134"/>
        <end position="154"/>
    </location>
</feature>
<feature type="topological domain" description="Lumenal" evidence="3">
    <location>
        <begin position="155"/>
        <end position="162"/>
    </location>
</feature>
<feature type="domain" description="LRAT" evidence="4">
    <location>
        <begin position="13"/>
        <end position="129"/>
    </location>
</feature>
<feature type="active site" evidence="4 11 12 14">
    <location>
        <position position="23"/>
    </location>
</feature>
<feature type="active site" evidence="4 11 12 14">
    <location>
        <position position="35"/>
    </location>
</feature>
<feature type="active site" description="Acyl-thioester intermediate" evidence="4 11 12 14">
    <location>
        <position position="113"/>
    </location>
</feature>
<feature type="sequence variant" id="VAR_089309" description="In FPLD9; likely pathogenic." evidence="17">
    <location>
        <begin position="113"/>
        <end position="162"/>
    </location>
</feature>
<feature type="mutagenesis site" description="No effect on PPP2R1A-binding." evidence="7">
    <original>H</original>
    <variation>A</variation>
    <location>
        <position position="23"/>
    </location>
</feature>
<feature type="mutagenesis site" description="Induces a major structural rearrangement accompanied by domain-swapping dimerization and changes in substrate-specificity." evidence="15">
    <original>PSEVAGAGAASVMSALTDK</original>
    <variation>DILLALTDDMGRTQKVVSNKRLILGVIVKV</variation>
    <location>
        <begin position="39"/>
        <end position="57"/>
    </location>
</feature>
<feature type="mutagenesis site" description="No effect on PPP2R1A-binding. Impaired ability to act as a host factor for picornaviruses." evidence="7 16">
    <original>C</original>
    <variation>S</variation>
    <location>
        <position position="113"/>
    </location>
</feature>
<feature type="sequence conflict" description="In Ref. 1; CAA63423 and 4; BAH08749." evidence="25" ref="1 4">
    <original>S</original>
    <variation>T</variation>
    <location>
        <position position="90"/>
    </location>
</feature>
<feature type="strand" evidence="29">
    <location>
        <begin position="13"/>
        <end position="18"/>
    </location>
</feature>
<feature type="strand" evidence="29">
    <location>
        <begin position="21"/>
        <end position="29"/>
    </location>
</feature>
<feature type="strand" evidence="29">
    <location>
        <begin position="32"/>
        <end position="37"/>
    </location>
</feature>
<feature type="strand" evidence="27">
    <location>
        <begin position="41"/>
        <end position="43"/>
    </location>
</feature>
<feature type="strand" evidence="27">
    <location>
        <begin position="45"/>
        <end position="48"/>
    </location>
</feature>
<feature type="helix" evidence="27">
    <location>
        <begin position="49"/>
        <end position="52"/>
    </location>
</feature>
<feature type="strand" evidence="29">
    <location>
        <begin position="58"/>
        <end position="64"/>
    </location>
</feature>
<feature type="helix" evidence="29">
    <location>
        <begin position="65"/>
        <end position="69"/>
    </location>
</feature>
<feature type="strand" evidence="29">
    <location>
        <begin position="72"/>
        <end position="76"/>
    </location>
</feature>
<feature type="turn" evidence="29">
    <location>
        <begin position="79"/>
        <end position="83"/>
    </location>
</feature>
<feature type="helix" evidence="29">
    <location>
        <begin position="89"/>
        <end position="98"/>
    </location>
</feature>
<feature type="turn" evidence="29">
    <location>
        <begin position="99"/>
        <end position="101"/>
    </location>
</feature>
<feature type="strand" evidence="28">
    <location>
        <begin position="103"/>
        <end position="109"/>
    </location>
</feature>
<feature type="helix" evidence="29">
    <location>
        <begin position="110"/>
        <end position="122"/>
    </location>
</feature>
<reference key="1">
    <citation type="journal article" date="1998" name="Oncogene">
        <title>Transcriptional and translational downregulation of H-REV107, a class II tumour suppressor gene located on human chromosome 11q11-12.</title>
        <authorList>
            <person name="Husmann K."/>
            <person name="Sers C."/>
            <person name="Fietze E."/>
            <person name="Mincheva A."/>
            <person name="Lichter P."/>
            <person name="Schafer R."/>
        </authorList>
    </citation>
    <scope>NUCLEOTIDE SEQUENCE [MRNA]</scope>
    <scope>TISSUE SPECIFICITY</scope>
    <source>
        <tissue>Liver</tissue>
    </source>
</reference>
<reference key="2">
    <citation type="submission" date="1999-08" db="EMBL/GenBank/DDBJ databases">
        <title>Human cDNA encoding H-REV107 protein homolog.</title>
        <authorList>
            <person name="Kato S."/>
        </authorList>
    </citation>
    <scope>NUCLEOTIDE SEQUENCE [MRNA]</scope>
</reference>
<reference key="3">
    <citation type="journal article" date="2001" name="Oncogene">
        <title>hH-Rev107, a class II tumor suppressor gene, is expressed by post-meiotic testicular germ cells and CIS cells but not by human testicular germ cell tumors.</title>
        <authorList>
            <person name="Siegrist S."/>
            <person name="Feral C."/>
            <person name="Chami M."/>
            <person name="Solhonne B."/>
            <person name="Mattei M.G."/>
            <person name="Rajpert-De Meyts E."/>
            <person name="Guellaen G."/>
            <person name="Bulle F."/>
        </authorList>
    </citation>
    <scope>NUCLEOTIDE SEQUENCE [MRNA]</scope>
    <scope>TISSUE SPECIFICITY</scope>
    <source>
        <tissue>Testis</tissue>
    </source>
</reference>
<reference key="4">
    <citation type="journal article" date="2009" name="Biochim. Biophys. Acta">
        <title>Characterization of the human tumor suppressors TIG3 and HRASLS2 as phospholipid-metabolizing enzymes.</title>
        <authorList>
            <person name="Uyama T."/>
            <person name="Jin X.H."/>
            <person name="Tsuboi K."/>
            <person name="Tonai T."/>
            <person name="Ueda N."/>
        </authorList>
    </citation>
    <scope>NUCLEOTIDE SEQUENCE [MRNA]</scope>
    <scope>FUNCTION</scope>
    <scope>TISSUE SPECIFICITY</scope>
    <scope>CATALYTIC ACTIVITY</scope>
    <scope>BIOPHYSICOCHEMICAL PROPERTIES</scope>
    <source>
        <tissue>Testis</tissue>
    </source>
</reference>
<reference key="5">
    <citation type="journal article" date="2004" name="Nat. Genet.">
        <title>Complete sequencing and characterization of 21,243 full-length human cDNAs.</title>
        <authorList>
            <person name="Ota T."/>
            <person name="Suzuki Y."/>
            <person name="Nishikawa T."/>
            <person name="Otsuki T."/>
            <person name="Sugiyama T."/>
            <person name="Irie R."/>
            <person name="Wakamatsu A."/>
            <person name="Hayashi K."/>
            <person name="Sato H."/>
            <person name="Nagai K."/>
            <person name="Kimura K."/>
            <person name="Makita H."/>
            <person name="Sekine M."/>
            <person name="Obayashi M."/>
            <person name="Nishi T."/>
            <person name="Shibahara T."/>
            <person name="Tanaka T."/>
            <person name="Ishii S."/>
            <person name="Yamamoto J."/>
            <person name="Saito K."/>
            <person name="Kawai Y."/>
            <person name="Isono Y."/>
            <person name="Nakamura Y."/>
            <person name="Nagahari K."/>
            <person name="Murakami K."/>
            <person name="Yasuda T."/>
            <person name="Iwayanagi T."/>
            <person name="Wagatsuma M."/>
            <person name="Shiratori A."/>
            <person name="Sudo H."/>
            <person name="Hosoiri T."/>
            <person name="Kaku Y."/>
            <person name="Kodaira H."/>
            <person name="Kondo H."/>
            <person name="Sugawara M."/>
            <person name="Takahashi M."/>
            <person name="Kanda K."/>
            <person name="Yokoi T."/>
            <person name="Furuya T."/>
            <person name="Kikkawa E."/>
            <person name="Omura Y."/>
            <person name="Abe K."/>
            <person name="Kamihara K."/>
            <person name="Katsuta N."/>
            <person name="Sato K."/>
            <person name="Tanikawa M."/>
            <person name="Yamazaki M."/>
            <person name="Ninomiya K."/>
            <person name="Ishibashi T."/>
            <person name="Yamashita H."/>
            <person name="Murakawa K."/>
            <person name="Fujimori K."/>
            <person name="Tanai H."/>
            <person name="Kimata M."/>
            <person name="Watanabe M."/>
            <person name="Hiraoka S."/>
            <person name="Chiba Y."/>
            <person name="Ishida S."/>
            <person name="Ono Y."/>
            <person name="Takiguchi S."/>
            <person name="Watanabe S."/>
            <person name="Yosida M."/>
            <person name="Hotuta T."/>
            <person name="Kusano J."/>
            <person name="Kanehori K."/>
            <person name="Takahashi-Fujii A."/>
            <person name="Hara H."/>
            <person name="Tanase T.-O."/>
            <person name="Nomura Y."/>
            <person name="Togiya S."/>
            <person name="Komai F."/>
            <person name="Hara R."/>
            <person name="Takeuchi K."/>
            <person name="Arita M."/>
            <person name="Imose N."/>
            <person name="Musashino K."/>
            <person name="Yuuki H."/>
            <person name="Oshima A."/>
            <person name="Sasaki N."/>
            <person name="Aotsuka S."/>
            <person name="Yoshikawa Y."/>
            <person name="Matsunawa H."/>
            <person name="Ichihara T."/>
            <person name="Shiohata N."/>
            <person name="Sano S."/>
            <person name="Moriya S."/>
            <person name="Momiyama H."/>
            <person name="Satoh N."/>
            <person name="Takami S."/>
            <person name="Terashima Y."/>
            <person name="Suzuki O."/>
            <person name="Nakagawa S."/>
            <person name="Senoh A."/>
            <person name="Mizoguchi H."/>
            <person name="Goto Y."/>
            <person name="Shimizu F."/>
            <person name="Wakebe H."/>
            <person name="Hishigaki H."/>
            <person name="Watanabe T."/>
            <person name="Sugiyama A."/>
            <person name="Takemoto M."/>
            <person name="Kawakami B."/>
            <person name="Yamazaki M."/>
            <person name="Watanabe K."/>
            <person name="Kumagai A."/>
            <person name="Itakura S."/>
            <person name="Fukuzumi Y."/>
            <person name="Fujimori Y."/>
            <person name="Komiyama M."/>
            <person name="Tashiro H."/>
            <person name="Tanigami A."/>
            <person name="Fujiwara T."/>
            <person name="Ono T."/>
            <person name="Yamada K."/>
            <person name="Fujii Y."/>
            <person name="Ozaki K."/>
            <person name="Hirao M."/>
            <person name="Ohmori Y."/>
            <person name="Kawabata A."/>
            <person name="Hikiji T."/>
            <person name="Kobatake N."/>
            <person name="Inagaki H."/>
            <person name="Ikema Y."/>
            <person name="Okamoto S."/>
            <person name="Okitani R."/>
            <person name="Kawakami T."/>
            <person name="Noguchi S."/>
            <person name="Itoh T."/>
            <person name="Shigeta K."/>
            <person name="Senba T."/>
            <person name="Matsumura K."/>
            <person name="Nakajima Y."/>
            <person name="Mizuno T."/>
            <person name="Morinaga M."/>
            <person name="Sasaki M."/>
            <person name="Togashi T."/>
            <person name="Oyama M."/>
            <person name="Hata H."/>
            <person name="Watanabe M."/>
            <person name="Komatsu T."/>
            <person name="Mizushima-Sugano J."/>
            <person name="Satoh T."/>
            <person name="Shirai Y."/>
            <person name="Takahashi Y."/>
            <person name="Nakagawa K."/>
            <person name="Okumura K."/>
            <person name="Nagase T."/>
            <person name="Nomura N."/>
            <person name="Kikuchi H."/>
            <person name="Masuho Y."/>
            <person name="Yamashita R."/>
            <person name="Nakai K."/>
            <person name="Yada T."/>
            <person name="Nakamura Y."/>
            <person name="Ohara O."/>
            <person name="Isogai T."/>
            <person name="Sugano S."/>
        </authorList>
    </citation>
    <scope>NUCLEOTIDE SEQUENCE [LARGE SCALE MRNA]</scope>
    <source>
        <tissue>Hippocampus</tissue>
    </source>
</reference>
<reference key="6">
    <citation type="submission" date="2005-07" db="EMBL/GenBank/DDBJ databases">
        <authorList>
            <person name="Mural R.J."/>
            <person name="Istrail S."/>
            <person name="Sutton G.G."/>
            <person name="Florea L."/>
            <person name="Halpern A.L."/>
            <person name="Mobarry C.M."/>
            <person name="Lippert R."/>
            <person name="Walenz B."/>
            <person name="Shatkay H."/>
            <person name="Dew I."/>
            <person name="Miller J.R."/>
            <person name="Flanigan M.J."/>
            <person name="Edwards N.J."/>
            <person name="Bolanos R."/>
            <person name="Fasulo D."/>
            <person name="Halldorsson B.V."/>
            <person name="Hannenhalli S."/>
            <person name="Turner R."/>
            <person name="Yooseph S."/>
            <person name="Lu F."/>
            <person name="Nusskern D.R."/>
            <person name="Shue B.C."/>
            <person name="Zheng X.H."/>
            <person name="Zhong F."/>
            <person name="Delcher A.L."/>
            <person name="Huson D.H."/>
            <person name="Kravitz S.A."/>
            <person name="Mouchard L."/>
            <person name="Reinert K."/>
            <person name="Remington K.A."/>
            <person name="Clark A.G."/>
            <person name="Waterman M.S."/>
            <person name="Eichler E.E."/>
            <person name="Adams M.D."/>
            <person name="Hunkapiller M.W."/>
            <person name="Myers E.W."/>
            <person name="Venter J.C."/>
        </authorList>
    </citation>
    <scope>NUCLEOTIDE SEQUENCE [LARGE SCALE GENOMIC DNA]</scope>
</reference>
<reference key="7">
    <citation type="journal article" date="2004" name="Genome Res.">
        <title>The status, quality, and expansion of the NIH full-length cDNA project: the Mammalian Gene Collection (MGC).</title>
        <authorList>
            <consortium name="The MGC Project Team"/>
        </authorList>
    </citation>
    <scope>NUCLEOTIDE SEQUENCE [LARGE SCALE MRNA]</scope>
    <source>
        <tissue>Colon</tissue>
    </source>
</reference>
<reference key="8">
    <citation type="journal article" date="1999" name="Int. J. Cancer">
        <title>Antigens recognized by autologous antibody in patients with renal-cell carcinoma.</title>
        <authorList>
            <person name="Scanlan M.J."/>
            <person name="Gordan J.D."/>
            <person name="Williamson B."/>
            <person name="Stockert E."/>
            <person name="Bander N.H."/>
            <person name="Jongeneel C.V."/>
            <person name="Gure A.O."/>
            <person name="Jaeger D."/>
            <person name="Jaeger E."/>
            <person name="Knuth A."/>
            <person name="Chen Y.-T."/>
            <person name="Old L.J."/>
        </authorList>
    </citation>
    <scope>IDENTIFICATION AS A RENAL CANCER ANTIGEN</scope>
    <source>
        <tissue>Renal cell carcinoma</tissue>
    </source>
</reference>
<reference key="9">
    <citation type="journal article" date="2002" name="Oncogene">
        <title>The class II tumour suppressor gene H-REV107-1 is a target of interferon-regulatory factor-1 and is involved in IFNgamma-induced cell death in human ovarian carcinoma cells.</title>
        <authorList>
            <person name="Sers C."/>
            <person name="Husmann K."/>
            <person name="Nazarenko I."/>
            <person name="Reich S."/>
            <person name="Wiechen K."/>
            <person name="Zhumabayeva B."/>
            <person name="Adhikari P."/>
            <person name="Schroder K."/>
            <person name="Gontarewicz A."/>
            <person name="Schafer R."/>
        </authorList>
    </citation>
    <scope>TISSUE SPECIFICITY</scope>
    <scope>INDUCTION</scope>
</reference>
<reference key="10">
    <citation type="journal article" date="2007" name="J. Cell Sci.">
        <title>Mechanisms of the HRSL3 tumor suppressor function in ovarian carcinoma cells.</title>
        <authorList>
            <person name="Nazarenko I."/>
            <person name="Schafer R."/>
            <person name="Sers C."/>
        </authorList>
    </citation>
    <scope>INTERACTION WITH PPP2R1A</scope>
    <scope>SUBCELLULAR LOCATION</scope>
    <scope>MUTAGENESIS OF HIS-23 AND CYS-113</scope>
</reference>
<reference key="11">
    <citation type="journal article" date="2009" name="J. Lipid Res.">
        <title>The tumor suppressor gene H-Rev107 functions as a novel Ca2+-independent cytosolic phospholipase A1/2 of the thiol hydrolase type.</title>
        <authorList>
            <person name="Uyama T."/>
            <person name="Morishita J."/>
            <person name="Jin X.H."/>
            <person name="Okamoto Y."/>
            <person name="Tsuboi K."/>
            <person name="Ueda N."/>
        </authorList>
    </citation>
    <scope>FUNCTION</scope>
    <scope>CATALYTIC ACTIVITY</scope>
</reference>
<reference key="12">
    <citation type="journal article" date="2009" name="Nat. Med.">
        <title>AdPLA ablation increases lipolysis and prevents obesity induced by high-fat feeding or leptin deficiency.</title>
        <authorList>
            <person name="Jaworski K."/>
            <person name="Ahmadian M."/>
            <person name="Duncan R.E."/>
            <person name="Sarkadi-Nagy E."/>
            <person name="Varady K.A."/>
            <person name="Hellerstein M.K."/>
            <person name="Lee H.Y."/>
            <person name="Samuel V.T."/>
            <person name="Shulman G.I."/>
            <person name="Kim K.H."/>
            <person name="de Val S."/>
            <person name="Kang C."/>
            <person name="Sul H.S."/>
        </authorList>
    </citation>
    <scope>TISSUE SPECIFICITY</scope>
</reference>
<reference key="13">
    <citation type="journal article" date="2017" name="Nature">
        <title>PLA2G16 represents a switch between entry and clearance of Picornaviridae.</title>
        <authorList>
            <person name="Staring J."/>
            <person name="von Castelmur E."/>
            <person name="Blomen V.A."/>
            <person name="van den Hengel L.G."/>
            <person name="Brockmann M."/>
            <person name="Baggen J."/>
            <person name="Thibaut H.J."/>
            <person name="Nieuwenhuis J."/>
            <person name="Janssen H."/>
            <person name="van Kuppeveld F.J."/>
            <person name="Perrakis A."/>
            <person name="Carette J.E."/>
            <person name="Brummelkamp T.R."/>
        </authorList>
    </citation>
    <scope>FUNCTION (MICROBIAL INFECTION)</scope>
    <scope>MUTAGENESIS OF CYS-113</scope>
</reference>
<reference key="14">
    <citation type="journal article" date="2010" name="FEBS Lett.">
        <title>Solution structure of the N-terminal catalytic domain of human H-REV107 -- a novel circular permutated NlpC/P60 domain.</title>
        <authorList>
            <person name="Ren X."/>
            <person name="Lin J."/>
            <person name="Jin C."/>
            <person name="Xia B."/>
        </authorList>
    </citation>
    <scope>STRUCTURE BY NMR OF 1-125</scope>
    <scope>ACTIVE SITE</scope>
</reference>
<reference key="15">
    <citation type="journal article" date="2012" name="J. Biol. Chem.">
        <title>Generation of N-acylphosphatidylethanolamine by members of the phospholipase A/acyltransferase (PLA/AT) family.</title>
        <authorList>
            <person name="Uyama T."/>
            <person name="Ikematsu N."/>
            <person name="Inoue M."/>
            <person name="Shinohara N."/>
            <person name="Jin X.H."/>
            <person name="Tsuboi K."/>
            <person name="Tonai T."/>
            <person name="Tokumura A."/>
            <person name="Ueda N."/>
        </authorList>
    </citation>
    <scope>FUNCTION</scope>
    <scope>CATALYTIC ACTIVITY</scope>
</reference>
<reference key="16">
    <citation type="journal article" date="2023" name="Nat. Genet.">
        <title>Loss of phospholipase PLAAT3 causes a mixed lipodystrophic and neurological syndrome due to impaired PPARgamma signaling.</title>
        <authorList>
            <consortium name="Program for Undiagnosed Diseases (UD-PrOZA)"/>
            <person name="Schuermans N."/>
            <person name="El Chehadeh S."/>
            <person name="Hemelsoet D."/>
            <person name="Gautheron J."/>
            <person name="Vantyghem M.C."/>
            <person name="Nouioua S."/>
            <person name="Tazir M."/>
            <person name="Vigouroux C."/>
            <person name="Auclair M."/>
            <person name="Bogaert E."/>
            <person name="Dufour S."/>
            <person name="Okawa F."/>
            <person name="Hilbert P."/>
            <person name="Van Doninck N."/>
            <person name="Taquet M.C."/>
            <person name="Rosseel T."/>
            <person name="De Clercq G."/>
            <person name="Debackere E."/>
            <person name="Van Haverbeke C."/>
            <person name="Cherif F.R."/>
            <person name="Urtizberea J.A."/>
            <person name="Chanson J.B."/>
            <person name="Funalot B."/>
            <person name="Authier F.J."/>
            <person name="Kaya S."/>
            <person name="Terryn W."/>
            <person name="Callens S."/>
            <person name="Depypere B."/>
            <person name="Van Dorpe J."/>
            <person name="Poppe B."/>
            <person name="Impens F."/>
            <person name="Mizushima N."/>
            <person name="Depienne C."/>
            <person name="Jeru I."/>
            <person name="Dermaut B."/>
        </authorList>
    </citation>
    <scope>INVOLVEMENT IN FPLD9</scope>
    <scope>VARIANT FPLD9 113-CYS--GLN-162 DEL</scope>
</reference>
<reference key="17">
    <citation type="journal article" date="2015" name="J. Biomed. Sci.">
        <title>The HRASLS (PLA/AT) subfamily of enzymes.</title>
        <authorList>
            <person name="Mardian E.B."/>
            <person name="Bradley R.M."/>
            <person name="Duncan R.E."/>
        </authorList>
    </citation>
    <scope>REVIEW</scope>
</reference>
<reference key="18">
    <citation type="journal article" date="2012" name="J. Biol. Chem.">
        <title>Structural basis for the acyltransferase activity of lecithin:retinol acyltransferase-like proteins.</title>
        <authorList>
            <person name="Golczak M."/>
            <person name="Kiser P.D."/>
            <person name="Sears A.E."/>
            <person name="Lodowski D.T."/>
            <person name="Blaner W.S."/>
            <person name="Palczewski K."/>
        </authorList>
    </citation>
    <scope>X-RAY CRYSTALLOGRAPHY (1.96 ANGSTROMS) OF 1-132</scope>
    <scope>FUNCTION</scope>
    <scope>CATALYTIC ACTIVITY</scope>
    <scope>ACTIVE SITE</scope>
    <scope>SUBCELLULAR LOCATION</scope>
</reference>
<reference key="19">
    <citation type="journal article" date="2012" name="J. Biol. Chem.">
        <title>Structure/Function relationships of adipose phospholipase A2 containing a cys-his-his catalytic triad.</title>
        <authorList>
            <person name="Pang X.Y."/>
            <person name="Cao J."/>
            <person name="Addington L."/>
            <person name="Lovell S."/>
            <person name="Battaile K.P."/>
            <person name="Zhang N."/>
            <person name="Rao J.L."/>
            <person name="Dennis E.A."/>
            <person name="Moise A.R."/>
        </authorList>
    </citation>
    <scope>X-RAY CRYSTALLOGRAPHY (2.65 ANGSTROMS) OF 1-134</scope>
    <scope>FUNCTION</scope>
    <scope>CATALYTIC ACTIVITY</scope>
    <scope>ACTIVE SITE</scope>
</reference>
<reference key="20">
    <citation type="journal article" date="2015" name="Nat. Chem. Biol.">
        <title>LRAT-specific domain facilitates vitamin A metabolism by domain swapping in HRASLS3.</title>
        <authorList>
            <person name="Golczak M."/>
            <person name="Sears A.E."/>
            <person name="Kiser P.D."/>
            <person name="Palczewski K."/>
        </authorList>
    </citation>
    <scope>X-RAY CRYSTALLOGRAPHY (2.20 ANGSTROMS) OF 2-38 AND 59-129</scope>
    <scope>MUTAGENESIS OF 39-PRO--LYS-57</scope>
</reference>
<keyword id="KW-0002">3D-structure</keyword>
<keyword id="KW-1003">Cell membrane</keyword>
<keyword id="KW-0963">Cytoplasm</keyword>
<keyword id="KW-0225">Disease variant</keyword>
<keyword id="KW-0256">Endoplasmic reticulum</keyword>
<keyword id="KW-0945">Host-virus interaction</keyword>
<keyword id="KW-0378">Hydrolase</keyword>
<keyword id="KW-0442">Lipid degradation</keyword>
<keyword id="KW-0443">Lipid metabolism</keyword>
<keyword id="KW-0458">Lysosome</keyword>
<keyword id="KW-0472">Membrane</keyword>
<keyword id="KW-0496">Mitochondrion</keyword>
<keyword id="KW-0539">Nucleus</keyword>
<keyword id="KW-0576">Peroxisome</keyword>
<keyword id="KW-1267">Proteomics identification</keyword>
<keyword id="KW-1185">Reference proteome</keyword>
<keyword id="KW-0808">Transferase</keyword>
<keyword id="KW-0812">Transmembrane</keyword>
<keyword id="KW-1133">Transmembrane helix</keyword>
<comment type="function">
    <text evidence="2 8 10 12 13 14 23">Exhibits both phospholipase A1/2 and acyltransferase activities (PubMed:19047760, PubMed:19615464, PubMed:22605381, PubMed:22825852, PubMed:26503625). Shows phospholipase A1 (PLA1) and A2 (PLA2) activity, catalyzing the calcium-independent release of fatty acids from the sn-1 or sn-2 position of glycerophospholipids (PubMed:19047760, PubMed:19615464, PubMed:22605381, PubMed:22825852, PubMed:22923616). For most substrates, PLA1 activity is much higher than PLA2 activity (PubMed:19615464). Shows O-acyltransferase activity,catalyzing the transfer of a fatty acyl group from glycerophospholipid to the hydroxyl group of lysophospholipid (PubMed:19615464). Shows N-acyltransferase activity, catalyzing the calcium-independent transfer of a fatty acyl group at the sn-1 position of phosphatidylcholine (PC) and other glycerophospholipids to the primary amine of phosphatidylethanolamine (PE), forming N-acylphosphatidylethanolamine (NAPE), which serves as precursor for N-acylethanolamines (NAEs) (PubMed:19047760, PubMed:19615464, PubMed:22605381, PubMed:22825852). Exhibits high N-acyltransferase activity and low phospholipase A1/2 activity (PubMed:22825852). Required for complete organelle rupture and degradation that occur during eye lens terminal differentiation, when fiber cells that compose the lens degrade all membrane-bound organelles in order to provide lens with transparency to allow the passage of light. Organelle membrane degradation is probably catalyzed by the phospholipase activity (By similarity).</text>
</comment>
<comment type="function">
    <text evidence="16">(Microbial infection) Acts as a host factor for picornaviruses: required during early infection to promote viral genome release into the cytoplasm (PubMed:28077878). May act as a cellular sensor of membrane damage at sites of virus entry, which relocalizes to sites of membrane rupture upon virus unfection (PubMed:28077878). Facilitates safe passage of the RNA away from LGALS8, enabling viral genome translation by host ribosome (PubMed:28077878). May also be involved in initiating pore formation, increasing pore size or in maintaining pores for genome delivery (PubMed:28077878). The lipid-modifying enzyme activity is required for this process (PubMed:28077878).</text>
</comment>
<comment type="catalytic activity">
    <reaction evidence="8 10 11 12 13 14">
        <text>a 1,2-diacyl-sn-glycero-3-phosphocholine + H2O = a 1-acyl-sn-glycero-3-phosphocholine + a fatty acid + H(+)</text>
        <dbReference type="Rhea" id="RHEA:15801"/>
        <dbReference type="ChEBI" id="CHEBI:15377"/>
        <dbReference type="ChEBI" id="CHEBI:15378"/>
        <dbReference type="ChEBI" id="CHEBI:28868"/>
        <dbReference type="ChEBI" id="CHEBI:57643"/>
        <dbReference type="ChEBI" id="CHEBI:58168"/>
        <dbReference type="EC" id="3.1.1.4"/>
    </reaction>
    <physiologicalReaction direction="left-to-right" evidence="10">
        <dbReference type="Rhea" id="RHEA:15802"/>
    </physiologicalReaction>
</comment>
<comment type="catalytic activity">
    <reaction evidence="8 10 11 12 13 14">
        <text>a 1,2-diacyl-sn-glycero-3-phosphocholine + H2O = a 2-acyl-sn-glycero-3-phosphocholine + a fatty acid + H(+)</text>
        <dbReference type="Rhea" id="RHEA:18689"/>
        <dbReference type="ChEBI" id="CHEBI:15377"/>
        <dbReference type="ChEBI" id="CHEBI:15378"/>
        <dbReference type="ChEBI" id="CHEBI:28868"/>
        <dbReference type="ChEBI" id="CHEBI:57643"/>
        <dbReference type="ChEBI" id="CHEBI:57875"/>
        <dbReference type="EC" id="3.1.1.32"/>
    </reaction>
    <physiologicalReaction direction="left-to-right" evidence="10">
        <dbReference type="Rhea" id="RHEA:18690"/>
    </physiologicalReaction>
</comment>
<comment type="catalytic activity">
    <reaction evidence="10">
        <text>1,2-dihexadecanoyl-sn-glycero-3-phosphocholine + H2O = 1-hexadecanoyl-sn-glycero-3-phosphocholine + hexadecanoate + H(+)</text>
        <dbReference type="Rhea" id="RHEA:41223"/>
        <dbReference type="ChEBI" id="CHEBI:7896"/>
        <dbReference type="ChEBI" id="CHEBI:15377"/>
        <dbReference type="ChEBI" id="CHEBI:15378"/>
        <dbReference type="ChEBI" id="CHEBI:72998"/>
        <dbReference type="ChEBI" id="CHEBI:72999"/>
    </reaction>
    <physiologicalReaction direction="left-to-right" evidence="10">
        <dbReference type="Rhea" id="RHEA:41224"/>
    </physiologicalReaction>
</comment>
<comment type="catalytic activity">
    <reaction evidence="10">
        <text>1,2-dihexadecanoyl-sn-glycero-3-phosphocholine + H2O = 2-hexadecanoyl-sn-glycero-3-phosphocholine + hexadecanoate + H(+)</text>
        <dbReference type="Rhea" id="RHEA:40487"/>
        <dbReference type="ChEBI" id="CHEBI:7896"/>
        <dbReference type="ChEBI" id="CHEBI:15377"/>
        <dbReference type="ChEBI" id="CHEBI:15378"/>
        <dbReference type="ChEBI" id="CHEBI:72999"/>
        <dbReference type="ChEBI" id="CHEBI:76078"/>
    </reaction>
    <physiologicalReaction direction="left-to-right" evidence="10">
        <dbReference type="Rhea" id="RHEA:40488"/>
    </physiologicalReaction>
</comment>
<comment type="catalytic activity">
    <reaction evidence="10">
        <text>1-hexadecanoyl-2-(9Z-octadecenoyl)-sn-glycero-3-phosphocholine + H2O = 2-(9Z-octadecenoyl)-sn-glycero-3-phosphocholine + hexadecanoate + H(+)</text>
        <dbReference type="Rhea" id="RHEA:38783"/>
        <dbReference type="ChEBI" id="CHEBI:7896"/>
        <dbReference type="ChEBI" id="CHEBI:15377"/>
        <dbReference type="ChEBI" id="CHEBI:15378"/>
        <dbReference type="ChEBI" id="CHEBI:73001"/>
        <dbReference type="ChEBI" id="CHEBI:76071"/>
    </reaction>
    <physiologicalReaction direction="left-to-right" evidence="10">
        <dbReference type="Rhea" id="RHEA:38784"/>
    </physiologicalReaction>
</comment>
<comment type="catalytic activity">
    <reaction evidence="10">
        <text>1-hexadecanoyl-2-(9Z-octadecenoyl)-sn-glycero-3-phosphocholine + H2O = 1-hexadecanoyl-sn-glycero-3-phosphocholine + (9Z)-octadecenoate + H(+)</text>
        <dbReference type="Rhea" id="RHEA:38779"/>
        <dbReference type="ChEBI" id="CHEBI:15377"/>
        <dbReference type="ChEBI" id="CHEBI:15378"/>
        <dbReference type="ChEBI" id="CHEBI:30823"/>
        <dbReference type="ChEBI" id="CHEBI:72998"/>
        <dbReference type="ChEBI" id="CHEBI:73001"/>
    </reaction>
    <physiologicalReaction direction="left-to-right" evidence="10">
        <dbReference type="Rhea" id="RHEA:38780"/>
    </physiologicalReaction>
</comment>
<comment type="catalytic activity">
    <reaction evidence="10 14">
        <text>1-hexadecanoyl-2-(5Z,8Z,11Z,14Z-eicosatetraenoyl)-sn-glycero-3-phosphocholine + H2O = 1-hexadecanoyl-sn-glycero-3-phosphocholine + (5Z,8Z,11Z,14Z)-eicosatetraenoate + H(+)</text>
        <dbReference type="Rhea" id="RHEA:40427"/>
        <dbReference type="ChEBI" id="CHEBI:15377"/>
        <dbReference type="ChEBI" id="CHEBI:15378"/>
        <dbReference type="ChEBI" id="CHEBI:32395"/>
        <dbReference type="ChEBI" id="CHEBI:72998"/>
        <dbReference type="ChEBI" id="CHEBI:73003"/>
    </reaction>
    <physiologicalReaction direction="left-to-right" evidence="10 14">
        <dbReference type="Rhea" id="RHEA:40428"/>
    </physiologicalReaction>
</comment>
<comment type="catalytic activity">
    <reaction evidence="10 14">
        <text>1-hexadecanoyl-2-(5Z,8Z,11Z,14Z-eicosatetraenoyl)-sn-glycero-3-phosphocholine + H2O = 2-(5Z,8Z,11Z,14Z)-eicosatetraenoyl-sn-glycero-3-phosphocholine + hexadecanoate + H(+)</text>
        <dbReference type="Rhea" id="RHEA:40571"/>
        <dbReference type="ChEBI" id="CHEBI:7896"/>
        <dbReference type="ChEBI" id="CHEBI:15377"/>
        <dbReference type="ChEBI" id="CHEBI:15378"/>
        <dbReference type="ChEBI" id="CHEBI:73003"/>
        <dbReference type="ChEBI" id="CHEBI:76079"/>
    </reaction>
    <physiologicalReaction direction="left-to-right" evidence="10 14">
        <dbReference type="Rhea" id="RHEA:40572"/>
    </physiologicalReaction>
</comment>
<comment type="catalytic activity">
    <reaction evidence="10">
        <text>1-hexadecanoyl-2-(9Z,12Z-octadecadienoyl)-sn-glycero-3-phosphoethanolamine + H2O = 1-hexadecanoyl-sn-glycero-3-phosphoethanolamine + (9Z,12Z)-octadecadienoate + H(+)</text>
        <dbReference type="Rhea" id="RHEA:40815"/>
        <dbReference type="ChEBI" id="CHEBI:15377"/>
        <dbReference type="ChEBI" id="CHEBI:15378"/>
        <dbReference type="ChEBI" id="CHEBI:30245"/>
        <dbReference type="ChEBI" id="CHEBI:73004"/>
        <dbReference type="ChEBI" id="CHEBI:73008"/>
    </reaction>
    <physiologicalReaction direction="left-to-right" evidence="10">
        <dbReference type="Rhea" id="RHEA:40816"/>
    </physiologicalReaction>
</comment>
<comment type="catalytic activity">
    <reaction evidence="10">
        <text>1-hexadecanoyl-2-(9Z,12Z-octadecadienoyl)-sn-glycero-3-phosphoethanolamine + H2O = 2-(9Z,12Z)-octadecadienoyl-sn-glycero-3-phosphoethanolamine + hexadecanoate + H(+)</text>
        <dbReference type="Rhea" id="RHEA:45164"/>
        <dbReference type="ChEBI" id="CHEBI:7896"/>
        <dbReference type="ChEBI" id="CHEBI:15377"/>
        <dbReference type="ChEBI" id="CHEBI:15378"/>
        <dbReference type="ChEBI" id="CHEBI:73008"/>
        <dbReference type="ChEBI" id="CHEBI:76090"/>
    </reaction>
    <physiologicalReaction direction="left-to-right" evidence="10">
        <dbReference type="Rhea" id="RHEA:45165"/>
    </physiologicalReaction>
</comment>
<comment type="catalytic activity">
    <reaction evidence="10">
        <text>1-hexadecanoyl-2-(5Z,8Z,11Z,14Z-eicosatetraenoyl)-sn-glycero-3-phosphoethanolamine + H2O = 1-hexadecanoyl-sn-glycero-3-phosphoethanolamine + (5Z,8Z,11Z,14Z)-eicosatetraenoate + H(+)</text>
        <dbReference type="Rhea" id="RHEA:40431"/>
        <dbReference type="ChEBI" id="CHEBI:15377"/>
        <dbReference type="ChEBI" id="CHEBI:15378"/>
        <dbReference type="ChEBI" id="CHEBI:32395"/>
        <dbReference type="ChEBI" id="CHEBI:73004"/>
        <dbReference type="ChEBI" id="CHEBI:73009"/>
    </reaction>
    <physiologicalReaction direction="left-to-right" evidence="10">
        <dbReference type="Rhea" id="RHEA:40432"/>
    </physiologicalReaction>
</comment>
<comment type="catalytic activity">
    <reaction evidence="10">
        <text>1-hexadecanoyl-2-(5Z,8Z,11Z,14Z-eicosatetraenoyl)-sn-glycero-3-phosphoethanolamine + H2O = 2-(5Z,8Z,11Z,14Z)-eicosatetraenoyl-sn-glycero-3-phosphoethanolamine + hexadecanoate + H(+)</text>
        <dbReference type="Rhea" id="RHEA:41348"/>
        <dbReference type="ChEBI" id="CHEBI:7896"/>
        <dbReference type="ChEBI" id="CHEBI:15377"/>
        <dbReference type="ChEBI" id="CHEBI:15378"/>
        <dbReference type="ChEBI" id="CHEBI:73009"/>
        <dbReference type="ChEBI" id="CHEBI:76091"/>
    </reaction>
    <physiologicalReaction direction="left-to-right" evidence="10">
        <dbReference type="Rhea" id="RHEA:41349"/>
    </physiologicalReaction>
</comment>
<comment type="catalytic activity">
    <reaction evidence="12">
        <text>1-hexanoyl-2-acyl-sn-glycero-3-phosphocholine + H2O = hexanoate + a 2-acyl-sn-glycero-3-phosphocholine + H(+)</text>
        <dbReference type="Rhea" id="RHEA:53496"/>
        <dbReference type="ChEBI" id="CHEBI:15377"/>
        <dbReference type="ChEBI" id="CHEBI:15378"/>
        <dbReference type="ChEBI" id="CHEBI:17120"/>
        <dbReference type="ChEBI" id="CHEBI:57875"/>
        <dbReference type="ChEBI" id="CHEBI:137403"/>
    </reaction>
    <physiologicalReaction direction="left-to-right" evidence="12">
        <dbReference type="Rhea" id="RHEA:53497"/>
    </physiologicalReaction>
</comment>
<comment type="catalytic activity">
    <reaction evidence="12">
        <text>1-hexanoyl-2-acyl-sn-glycero-3-phosphocholine + H2O = 1-hexanoyl-sn-glycero-3-phosphocholine + a fatty acid + H(+)</text>
        <dbReference type="Rhea" id="RHEA:53500"/>
        <dbReference type="ChEBI" id="CHEBI:15377"/>
        <dbReference type="ChEBI" id="CHEBI:15378"/>
        <dbReference type="ChEBI" id="CHEBI:28868"/>
        <dbReference type="ChEBI" id="CHEBI:78215"/>
        <dbReference type="ChEBI" id="CHEBI:137403"/>
    </reaction>
    <physiologicalReaction direction="left-to-right" evidence="12">
        <dbReference type="Rhea" id="RHEA:53501"/>
    </physiologicalReaction>
</comment>
<comment type="catalytic activity">
    <reaction evidence="12">
        <text>1,2-diheptadecanoyl-sn-glycero-3-phosphoethanolamine + 1-(9Z-octadecenoyl)-2-hexadecanoyl-sn-glycero-3-phosphocholine = 1,2-diheptadecanoyl-sn-glycero-3-phospho-N-hexadecanoyl-ethanolamine + 1-(9Z-octadecenoyl)-sn-glycero-3-phosphocholine + H(+)</text>
        <dbReference type="Rhea" id="RHEA:53524"/>
        <dbReference type="ChEBI" id="CHEBI:15378"/>
        <dbReference type="ChEBI" id="CHEBI:28610"/>
        <dbReference type="ChEBI" id="CHEBI:74667"/>
        <dbReference type="ChEBI" id="CHEBI:138218"/>
        <dbReference type="ChEBI" id="CHEBI:138220"/>
    </reaction>
    <physiologicalReaction direction="left-to-right" evidence="12">
        <dbReference type="Rhea" id="RHEA:53525"/>
    </physiologicalReaction>
</comment>
<comment type="catalytic activity">
    <reaction evidence="12">
        <text>1,2-diheptadecanoyl-sn-glycero-3-phosphoethanolamine + 1-(9Z-octadecenoyl)-2-hexadecanoyl-sn-glycero-3-phosphocholine = 1,2-diheptadecanoyl-sn-glycero-3-phospho-N-(9Z-octadecenoyl)-ethanolamine + 2-hexadecanoyl-sn-glycero-3-phosphocholine + H(+)</text>
        <dbReference type="Rhea" id="RHEA:53528"/>
        <dbReference type="ChEBI" id="CHEBI:15378"/>
        <dbReference type="ChEBI" id="CHEBI:74667"/>
        <dbReference type="ChEBI" id="CHEBI:76078"/>
        <dbReference type="ChEBI" id="CHEBI:138218"/>
        <dbReference type="ChEBI" id="CHEBI:138222"/>
    </reaction>
    <physiologicalReaction direction="left-to-right" evidence="12">
        <dbReference type="Rhea" id="RHEA:53529"/>
    </physiologicalReaction>
</comment>
<comment type="catalytic activity">
    <reaction evidence="12">
        <text>1,2-dihexanoyl-sn-glycero-3-phosphoethanolamine + 2-heptanoyl-sn-glycero-3-phosphocholine = hexanoyl-sn-glycero-3-phosphoethanolamine + 1-hexanoyl-2-heptanoyl-sn-glycero-3-phosphocholine</text>
        <dbReference type="Rhea" id="RHEA:54544"/>
        <dbReference type="ChEBI" id="CHEBI:138197"/>
        <dbReference type="ChEBI" id="CHEBI:138216"/>
        <dbReference type="ChEBI" id="CHEBI:138266"/>
        <dbReference type="ChEBI" id="CHEBI:138267"/>
    </reaction>
    <physiologicalReaction direction="left-to-right" evidence="12">
        <dbReference type="Rhea" id="RHEA:54545"/>
    </physiologicalReaction>
</comment>
<comment type="catalytic activity">
    <reaction evidence="14">
        <text>1-hexadecanoyl-2-octadecanoyl-sn-glycero-3-phosphocholine + H2O = octadecanoate + 1-hexadecanoyl-sn-glycero-3-phosphocholine + H(+)</text>
        <dbReference type="Rhea" id="RHEA:56432"/>
        <dbReference type="ChEBI" id="CHEBI:15377"/>
        <dbReference type="ChEBI" id="CHEBI:15378"/>
        <dbReference type="ChEBI" id="CHEBI:25629"/>
        <dbReference type="ChEBI" id="CHEBI:72998"/>
        <dbReference type="ChEBI" id="CHEBI:73000"/>
    </reaction>
    <physiologicalReaction direction="left-to-right" evidence="14">
        <dbReference type="Rhea" id="RHEA:56433"/>
    </physiologicalReaction>
</comment>
<comment type="catalytic activity">
    <reaction evidence="14">
        <text>1-hexadecanoyl-2-octadecanoyl-sn-glycero-3-phosphocholine + H2O = 2-octadecanoyl-sn-glycero-3-phosphocholine + hexadecanoate + H(+)</text>
        <dbReference type="Rhea" id="RHEA:56436"/>
        <dbReference type="ChEBI" id="CHEBI:7896"/>
        <dbReference type="ChEBI" id="CHEBI:15377"/>
        <dbReference type="ChEBI" id="CHEBI:15378"/>
        <dbReference type="ChEBI" id="CHEBI:73000"/>
        <dbReference type="ChEBI" id="CHEBI:76076"/>
    </reaction>
    <physiologicalReaction direction="left-to-right" evidence="14">
        <dbReference type="Rhea" id="RHEA:56437"/>
    </physiologicalReaction>
</comment>
<comment type="catalytic activity">
    <reaction evidence="14">
        <text>1-octadecanoyl-2-hexadecanoyl-sn-glycero-3-phosphocholine + H2O = 1-octadecanoyl-sn-glycero-3-phosphocholine + hexadecanoate + H(+)</text>
        <dbReference type="Rhea" id="RHEA:56440"/>
        <dbReference type="ChEBI" id="CHEBI:7896"/>
        <dbReference type="ChEBI" id="CHEBI:15377"/>
        <dbReference type="ChEBI" id="CHEBI:15378"/>
        <dbReference type="ChEBI" id="CHEBI:73858"/>
        <dbReference type="ChEBI" id="CHEBI:75026"/>
    </reaction>
    <physiologicalReaction direction="left-to-right" evidence="14">
        <dbReference type="Rhea" id="RHEA:56441"/>
    </physiologicalReaction>
</comment>
<comment type="catalytic activity">
    <reaction evidence="14">
        <text>1-octadecanoyl-2-hexadecanoyl-sn-glycero-3-phosphocholine + H2O = 2-hexadecanoyl-sn-glycero-3-phosphocholine + octadecanoate + H(+)</text>
        <dbReference type="Rhea" id="RHEA:56444"/>
        <dbReference type="ChEBI" id="CHEBI:15377"/>
        <dbReference type="ChEBI" id="CHEBI:15378"/>
        <dbReference type="ChEBI" id="CHEBI:25629"/>
        <dbReference type="ChEBI" id="CHEBI:75026"/>
        <dbReference type="ChEBI" id="CHEBI:76078"/>
    </reaction>
    <physiologicalReaction direction="left-to-right" evidence="14">
        <dbReference type="Rhea" id="RHEA:56445"/>
    </physiologicalReaction>
</comment>
<comment type="catalytic activity">
    <reaction evidence="14">
        <text>1-hexadecanoyl-2-(9Z,12Z-octadecadienoyl)-sn-glycero-3-phosphocholine + H2O = (9Z,12Z)-octadecadienoate + 1-hexadecanoyl-sn-glycero-3-phosphocholine + H(+)</text>
        <dbReference type="Rhea" id="RHEA:40811"/>
        <dbReference type="ChEBI" id="CHEBI:15377"/>
        <dbReference type="ChEBI" id="CHEBI:15378"/>
        <dbReference type="ChEBI" id="CHEBI:30245"/>
        <dbReference type="ChEBI" id="CHEBI:72998"/>
        <dbReference type="ChEBI" id="CHEBI:73002"/>
    </reaction>
    <physiologicalReaction direction="left-to-right" evidence="14">
        <dbReference type="Rhea" id="RHEA:40812"/>
    </physiologicalReaction>
</comment>
<comment type="catalytic activity">
    <reaction evidence="14">
        <text>1-hexadecanoyl-2-(9Z,12Z-octadecadienoyl)-sn-glycero-3-phosphocholine + H2O = 2-(9Z,12Z-octadecadienoyl)-sn-glycero-3-phosphocholine + hexadecanoate + H(+)</text>
        <dbReference type="Rhea" id="RHEA:40971"/>
        <dbReference type="ChEBI" id="CHEBI:7896"/>
        <dbReference type="ChEBI" id="CHEBI:15377"/>
        <dbReference type="ChEBI" id="CHEBI:15378"/>
        <dbReference type="ChEBI" id="CHEBI:73002"/>
        <dbReference type="ChEBI" id="CHEBI:76084"/>
    </reaction>
    <physiologicalReaction direction="left-to-right" evidence="14">
        <dbReference type="Rhea" id="RHEA:40972"/>
    </physiologicalReaction>
</comment>
<comment type="catalytic activity">
    <reaction evidence="14">
        <text>1,2-di-(9Z-octadecenoyl)-sn-glycero-3-phosphocholine + H2O = 2-(9Z-octadecenoyl)-sn-glycero-3-phosphocholine + (9Z)-octadecenoate + H(+)</text>
        <dbReference type="Rhea" id="RHEA:56448"/>
        <dbReference type="ChEBI" id="CHEBI:15377"/>
        <dbReference type="ChEBI" id="CHEBI:15378"/>
        <dbReference type="ChEBI" id="CHEBI:30823"/>
        <dbReference type="ChEBI" id="CHEBI:74669"/>
        <dbReference type="ChEBI" id="CHEBI:76071"/>
    </reaction>
    <physiologicalReaction direction="left-to-right" evidence="14">
        <dbReference type="Rhea" id="RHEA:56449"/>
    </physiologicalReaction>
</comment>
<comment type="catalytic activity">
    <reaction evidence="8">
        <text>1,2-dihexadecanoyl-sn-glycero-3-phosphocholine + H2O = hexadecanoyl-sn-glycero-3-phosphocholine + hexadecanoate + H(+)</text>
        <dbReference type="Rhea" id="RHEA:41384"/>
        <dbReference type="ChEBI" id="CHEBI:7896"/>
        <dbReference type="ChEBI" id="CHEBI:15377"/>
        <dbReference type="ChEBI" id="CHEBI:15378"/>
        <dbReference type="ChEBI" id="CHEBI:64563"/>
        <dbReference type="ChEBI" id="CHEBI:72999"/>
    </reaction>
    <physiologicalReaction direction="left-to-right" evidence="8">
        <dbReference type="Rhea" id="RHEA:41385"/>
    </physiologicalReaction>
</comment>
<comment type="catalytic activity">
    <reaction evidence="14">
        <text>1,2-di-(9Z-octadecenoyl)-sn-glycero-3-phosphocholine + H2O = 1-(9Z-octadecenoyl)-sn-glycero-3-phosphocholine + (9Z)-octadecenoate + H(+)</text>
        <dbReference type="Rhea" id="RHEA:40923"/>
        <dbReference type="ChEBI" id="CHEBI:15377"/>
        <dbReference type="ChEBI" id="CHEBI:15378"/>
        <dbReference type="ChEBI" id="CHEBI:28610"/>
        <dbReference type="ChEBI" id="CHEBI:30823"/>
        <dbReference type="ChEBI" id="CHEBI:74669"/>
    </reaction>
    <physiologicalReaction direction="left-to-right" evidence="14">
        <dbReference type="Rhea" id="RHEA:40924"/>
    </physiologicalReaction>
</comment>
<comment type="catalytic activity">
    <reaction evidence="1">
        <text>1,2-di-(9Z-octadecenoyl)-sn-glycero-3-phosphoethanolamine + 1,2-dihexadecanoyl-sn-glycero-3-phosphocholine = hexadecanoyl-sn-glycero-3-phosphocholine + N-hexadecanoyl-1,2-di-(9Z-octadecenoyl)-sn-glycero-3-phosphoethanolamine + H(+)</text>
        <dbReference type="Rhea" id="RHEA:41360"/>
        <dbReference type="ChEBI" id="CHEBI:15378"/>
        <dbReference type="ChEBI" id="CHEBI:64563"/>
        <dbReference type="ChEBI" id="CHEBI:72999"/>
        <dbReference type="ChEBI" id="CHEBI:74986"/>
        <dbReference type="ChEBI" id="CHEBI:78097"/>
    </reaction>
    <physiologicalReaction direction="left-to-right" evidence="1">
        <dbReference type="Rhea" id="RHEA:41361"/>
    </physiologicalReaction>
</comment>
<comment type="catalytic activity">
    <reaction evidence="2">
        <text>1,2-di-(9Z,12Z-octadecadienoyl)-sn-glycero-3-phosphocholine + H2O = 1-(9Z,12Z)-octadecadienoyl-sn-glycero-3-phosphocholine + (9Z,12Z)-octadecadienoate + H(+)</text>
        <dbReference type="Rhea" id="RHEA:56428"/>
        <dbReference type="ChEBI" id="CHEBI:15377"/>
        <dbReference type="ChEBI" id="CHEBI:15378"/>
        <dbReference type="ChEBI" id="CHEBI:28733"/>
        <dbReference type="ChEBI" id="CHEBI:30245"/>
        <dbReference type="ChEBI" id="CHEBI:42027"/>
    </reaction>
    <physiologicalReaction direction="left-to-right" evidence="2">
        <dbReference type="Rhea" id="RHEA:56429"/>
    </physiologicalReaction>
</comment>
<comment type="biophysicochemical properties">
    <kinetics>
        <KM evidence="10">300 uM for dipalmitoyl-PC</KM>
        <Vmax evidence="10">2.57 umol/min/mg enzyme with dipalmitoyl-PC as substrate</Vmax>
        <Vmax evidence="10">267.0 nmol/min/mg enzyme with dipalmitoyl-PE as substrate</Vmax>
    </kinetics>
    <phDependence>
        <text evidence="10">Optimum pH is 9.</text>
    </phDependence>
</comment>
<comment type="subunit">
    <text evidence="7">Interacts with PPP2R1A; this interaction might decrease PP2A activity.</text>
</comment>
<comment type="interaction">
    <interactant intactId="EBI-746318">
        <id>P53816</id>
    </interactant>
    <interactant intactId="EBI-302388">
        <id>P30153</id>
        <label>PPP2R1A</label>
    </interactant>
    <organismsDiffer>false</organismsDiffer>
    <experiments>7</experiments>
</comment>
<comment type="interaction">
    <interactant intactId="EBI-746318">
        <id>P53816</id>
    </interactant>
    <interactant intactId="EBI-741480">
        <id>Q9UMX0</id>
        <label>UBQLN1</label>
    </interactant>
    <organismsDiffer>false</organismsDiffer>
    <experiments>7</experiments>
</comment>
<comment type="interaction">
    <interactant intactId="EBI-746318">
        <id>P53816</id>
    </interactant>
    <interactant intactId="EBI-10173939">
        <id>Q9UMX0-2</id>
        <label>UBQLN1</label>
    </interactant>
    <organismsDiffer>false</organismsDiffer>
    <experiments>3</experiments>
</comment>
<comment type="interaction">
    <interactant intactId="EBI-746318">
        <id>P53816</id>
    </interactant>
    <interactant intactId="EBI-947187">
        <id>Q9UHD9</id>
        <label>UBQLN2</label>
    </interactant>
    <organismsDiffer>false</organismsDiffer>
    <experiments>3</experiments>
</comment>
<comment type="subcellular location">
    <subcellularLocation>
        <location evidence="1">Cell membrane</location>
        <topology evidence="3">Single-pass membrane protein</topology>
    </subcellularLocation>
    <subcellularLocation>
        <location evidence="7">Cytoplasm</location>
    </subcellularLocation>
    <subcellularLocation>
        <location evidence="2">Cytoplasm</location>
        <location evidence="2">Cytosol</location>
    </subcellularLocation>
    <subcellularLocation>
        <location evidence="2">Cytoplasm</location>
        <location evidence="2">Perinuclear region</location>
    </subcellularLocation>
    <subcellularLocation>
        <location evidence="2">Peroxisome membrane</location>
        <topology evidence="25">Single-pass membrane protein</topology>
    </subcellularLocation>
    <subcellularLocation>
        <location evidence="2">Mitochondrion membrane</location>
        <topology evidence="25">Single-pass membrane protein</topology>
    </subcellularLocation>
    <subcellularLocation>
        <location evidence="2">Nucleus envelope</location>
    </subcellularLocation>
    <subcellularLocation>
        <location evidence="2">Lysosome membrane</location>
        <topology evidence="25">Single-pass membrane protein</topology>
    </subcellularLocation>
    <subcellularLocation>
        <location evidence="2">Endoplasmic reticulum membrane</location>
        <topology evidence="25">Single-pass membrane protein</topology>
    </subcellularLocation>
    <text evidence="2">During eye lens differentiation, recruited from the cytosol to various organelles, including mitochondria, endoplasmic reticulum, nuclear envelope and lysosomes, immediately before organelle degradation. This translocation is triggered by organelle membrane damage and requires the C-terminal transmembrane domain.</text>
</comment>
<comment type="tissue specificity">
    <text evidence="5 6 9 10 18">Widely expressed. Low expression, if any, in hematopoietic cells and thymus. In testis, confined to round spermatids. Expressed in normal ovarian epithelial cells. Down-regulated in some ovarian carcinomas and testicular germ cell tumors. Highly expressed in white adipose tissue (PubMed:19136964).</text>
</comment>
<comment type="induction">
    <text evidence="6">By IFNG and IRF1.</text>
</comment>
<comment type="domain">
    <text evidence="2">The C-terminal transmembrane domain is required for the targeting of the protein to damaged organelles.</text>
</comment>
<comment type="disease" evidence="17">
    <disease id="DI-06826">
        <name>Lipodystrophy, familial partial, 9</name>
        <acronym>FPLD9</acronym>
        <description>An autosomal recessive form of partial lipodystrophy, a disorder characterized by abnormal subcutaneous fat distribution. FPLD9 patients are lean and show muscular hypertrophy, insulin-resistant diabetes with hyperinsulinemia, hypertriglyceridemia with low high-density lipoprotein (HDL) cholesterol, liver steatosis, and polycystic ovary syndrome with hirsutism. Some patients have more generalized lipoatrophy, whereas others have abnormal fat accumulation in the face and neck regions and show cushingoid or acromegalic facial features. Most patients also have neurologic features, including demyelinating polyneuropathy, developmental delay and intellectual disability.</description>
        <dbReference type="MIM" id="620683"/>
    </disease>
    <text>The disease is caused by variants affecting the gene represented in this entry.</text>
</comment>
<comment type="similarity">
    <text evidence="25">Belongs to the H-rev107 family.</text>
</comment>
<comment type="online information" name="Protein Spotlight">
    <link uri="https://www.proteinspotlight.org/back_issues/241/"/>
    <text>The makings of transparency - Issue 241 of November 2021</text>
</comment>
<proteinExistence type="evidence at protein level"/>
<protein>
    <recommendedName>
        <fullName evidence="26">Phospholipase A and acyltransferase 3</fullName>
        <ecNumber evidence="8 10 12 13">2.3.1.-</ecNumber>
        <ecNumber evidence="8 10 12 13 14">3.1.1.32</ecNumber>
        <ecNumber evidence="8 10 12 13 14">3.1.1.4</ecNumber>
    </recommendedName>
    <alternativeName>
        <fullName evidence="22">Adipose-specific phospholipase A2</fullName>
        <shortName evidence="22">AdPLA</shortName>
    </alternativeName>
    <alternativeName>
        <fullName evidence="26">Group XVI phospholipase A1/A2</fullName>
    </alternativeName>
    <alternativeName>
        <fullName evidence="24">H-rev 107 protein homolog</fullName>
        <shortName evidence="24">H-REV107</shortName>
        <shortName evidence="24">HREV107-1</shortName>
    </alternativeName>
    <alternativeName>
        <fullName>HRAS-like suppressor 1</fullName>
    </alternativeName>
    <alternativeName>
        <fullName evidence="20">HRAS-like suppressor 3</fullName>
        <shortName evidence="20">HRSL3</shortName>
    </alternativeName>
    <alternativeName>
        <fullName>HREV107-3</fullName>
    </alternativeName>
    <alternativeName>
        <fullName evidence="19">Renal carcinoma antigen NY-REN-65</fullName>
    </alternativeName>
</protein>
<accession>P53816</accession>
<accession>B2R7Q4</accession>
<accession>B7XAK5</accession>
<accession>Q3SYI3</accession>
<accession>Q9HDD1</accession>
<evidence type="ECO:0000250" key="1">
    <source>
        <dbReference type="UniProtKB" id="P53817"/>
    </source>
</evidence>
<evidence type="ECO:0000250" key="2">
    <source>
        <dbReference type="UniProtKB" id="Q8R3U1"/>
    </source>
</evidence>
<evidence type="ECO:0000255" key="3"/>
<evidence type="ECO:0000255" key="4">
    <source>
        <dbReference type="PROSITE-ProRule" id="PRU01283"/>
    </source>
</evidence>
<evidence type="ECO:0000269" key="5">
    <source>
    </source>
</evidence>
<evidence type="ECO:0000269" key="6">
    <source>
    </source>
</evidence>
<evidence type="ECO:0000269" key="7">
    <source>
    </source>
</evidence>
<evidence type="ECO:0000269" key="8">
    <source>
    </source>
</evidence>
<evidence type="ECO:0000269" key="9">
    <source>
    </source>
</evidence>
<evidence type="ECO:0000269" key="10">
    <source>
    </source>
</evidence>
<evidence type="ECO:0000269" key="11">
    <source>
    </source>
</evidence>
<evidence type="ECO:0000269" key="12">
    <source>
    </source>
</evidence>
<evidence type="ECO:0000269" key="13">
    <source>
    </source>
</evidence>
<evidence type="ECO:0000269" key="14">
    <source>
    </source>
</evidence>
<evidence type="ECO:0000269" key="15">
    <source>
    </source>
</evidence>
<evidence type="ECO:0000269" key="16">
    <source>
    </source>
</evidence>
<evidence type="ECO:0000269" key="17">
    <source>
    </source>
</evidence>
<evidence type="ECO:0000269" key="18">
    <source>
    </source>
</evidence>
<evidence type="ECO:0000303" key="19">
    <source>
    </source>
</evidence>
<evidence type="ECO:0000303" key="20">
    <source>
    </source>
</evidence>
<evidence type="ECO:0000303" key="21">
    <source>
    </source>
</evidence>
<evidence type="ECO:0000303" key="22">
    <source>
    </source>
</evidence>
<evidence type="ECO:0000303" key="23">
    <source>
    </source>
</evidence>
<evidence type="ECO:0000303" key="24">
    <source>
    </source>
</evidence>
<evidence type="ECO:0000305" key="25"/>
<evidence type="ECO:0000312" key="26">
    <source>
        <dbReference type="HGNC" id="HGNC:17825"/>
    </source>
</evidence>
<evidence type="ECO:0007829" key="27">
    <source>
        <dbReference type="PDB" id="2KYT"/>
    </source>
</evidence>
<evidence type="ECO:0007829" key="28">
    <source>
        <dbReference type="PDB" id="4Q95"/>
    </source>
</evidence>
<evidence type="ECO:0007829" key="29">
    <source>
        <dbReference type="PDB" id="7ZOM"/>
    </source>
</evidence>
<organism>
    <name type="scientific">Homo sapiens</name>
    <name type="common">Human</name>
    <dbReference type="NCBI Taxonomy" id="9606"/>
    <lineage>
        <taxon>Eukaryota</taxon>
        <taxon>Metazoa</taxon>
        <taxon>Chordata</taxon>
        <taxon>Craniata</taxon>
        <taxon>Vertebrata</taxon>
        <taxon>Euteleostomi</taxon>
        <taxon>Mammalia</taxon>
        <taxon>Eutheria</taxon>
        <taxon>Euarchontoglires</taxon>
        <taxon>Primates</taxon>
        <taxon>Haplorrhini</taxon>
        <taxon>Catarrhini</taxon>
        <taxon>Hominidae</taxon>
        <taxon>Homo</taxon>
    </lineage>
</organism>